<dbReference type="EMBL" id="BC085935">
    <property type="protein sequence ID" value="AAH85935.1"/>
    <property type="molecule type" value="mRNA"/>
</dbReference>
<dbReference type="RefSeq" id="NP_001020216.1">
    <property type="nucleotide sequence ID" value="NM_001025045.2"/>
</dbReference>
<dbReference type="SMR" id="Q5U2N8"/>
<dbReference type="FunCoup" id="Q5U2N8">
    <property type="interactions" value="1193"/>
</dbReference>
<dbReference type="STRING" id="10116.ENSRNOP00000034588"/>
<dbReference type="iPTMnet" id="Q5U2N8"/>
<dbReference type="PhosphoSitePlus" id="Q5U2N8"/>
<dbReference type="PaxDb" id="10116-ENSRNOP00000034588"/>
<dbReference type="Ensembl" id="ENSRNOT00000031193.6">
    <property type="protein sequence ID" value="ENSRNOP00000034588.4"/>
    <property type="gene ID" value="ENSRNOG00000027617.6"/>
</dbReference>
<dbReference type="GeneID" id="500086"/>
<dbReference type="KEGG" id="rno:500086"/>
<dbReference type="UCSC" id="RGD:1561363">
    <property type="organism name" value="rat"/>
</dbReference>
<dbReference type="AGR" id="RGD:1561363"/>
<dbReference type="CTD" id="79989"/>
<dbReference type="RGD" id="1561363">
    <property type="gene designation" value="Ift56"/>
</dbReference>
<dbReference type="eggNOG" id="KOG3785">
    <property type="taxonomic scope" value="Eukaryota"/>
</dbReference>
<dbReference type="GeneTree" id="ENSGT00390000000159"/>
<dbReference type="HOGENOM" id="CLU_036306_2_0_1"/>
<dbReference type="InParanoid" id="Q5U2N8"/>
<dbReference type="OMA" id="FIIRRDY"/>
<dbReference type="OrthoDB" id="95390at2759"/>
<dbReference type="PhylomeDB" id="Q5U2N8"/>
<dbReference type="Reactome" id="R-RNO-5620924">
    <property type="pathway name" value="Intraflagellar transport"/>
</dbReference>
<dbReference type="PRO" id="PR:Q5U2N8"/>
<dbReference type="Proteomes" id="UP000002494">
    <property type="component" value="Chromosome 4"/>
</dbReference>
<dbReference type="Bgee" id="ENSRNOG00000027617">
    <property type="expression patterns" value="Expressed in testis and 18 other cell types or tissues"/>
</dbReference>
<dbReference type="GO" id="GO:0005813">
    <property type="term" value="C:centrosome"/>
    <property type="evidence" value="ECO:0000266"/>
    <property type="project" value="RGD"/>
</dbReference>
<dbReference type="GO" id="GO:0036064">
    <property type="term" value="C:ciliary basal body"/>
    <property type="evidence" value="ECO:0000266"/>
    <property type="project" value="RGD"/>
</dbReference>
<dbReference type="GO" id="GO:0097546">
    <property type="term" value="C:ciliary base"/>
    <property type="evidence" value="ECO:0000318"/>
    <property type="project" value="GO_Central"/>
</dbReference>
<dbReference type="GO" id="GO:0005929">
    <property type="term" value="C:cilium"/>
    <property type="evidence" value="ECO:0000314"/>
    <property type="project" value="UniProtKB"/>
</dbReference>
<dbReference type="GO" id="GO:0030992">
    <property type="term" value="C:intraciliary transport particle B"/>
    <property type="evidence" value="ECO:0000250"/>
    <property type="project" value="UniProtKB"/>
</dbReference>
<dbReference type="GO" id="GO:0043005">
    <property type="term" value="C:neuron projection"/>
    <property type="evidence" value="ECO:0000266"/>
    <property type="project" value="RGD"/>
</dbReference>
<dbReference type="GO" id="GO:0120170">
    <property type="term" value="F:intraciliary transport particle B binding"/>
    <property type="evidence" value="ECO:0000266"/>
    <property type="project" value="RGD"/>
</dbReference>
<dbReference type="GO" id="GO:0035082">
    <property type="term" value="P:axoneme assembly"/>
    <property type="evidence" value="ECO:0000250"/>
    <property type="project" value="UniProtKB"/>
</dbReference>
<dbReference type="GO" id="GO:0060271">
    <property type="term" value="P:cilium assembly"/>
    <property type="evidence" value="ECO:0000250"/>
    <property type="project" value="UniProtKB"/>
</dbReference>
<dbReference type="GO" id="GO:0035720">
    <property type="term" value="P:intraciliary anterograde transport"/>
    <property type="evidence" value="ECO:0000318"/>
    <property type="project" value="GO_Central"/>
</dbReference>
<dbReference type="GO" id="GO:0042073">
    <property type="term" value="P:intraciliary transport"/>
    <property type="evidence" value="ECO:0000250"/>
    <property type="project" value="UniProtKB"/>
</dbReference>
<dbReference type="GO" id="GO:0035735">
    <property type="term" value="P:intraciliary transport involved in cilium assembly"/>
    <property type="evidence" value="ECO:0000318"/>
    <property type="project" value="GO_Central"/>
</dbReference>
<dbReference type="GO" id="GO:1905198">
    <property type="term" value="P:manchette assembly"/>
    <property type="evidence" value="ECO:0000266"/>
    <property type="project" value="RGD"/>
</dbReference>
<dbReference type="GO" id="GO:0061512">
    <property type="term" value="P:protein localization to cilium"/>
    <property type="evidence" value="ECO:0000250"/>
    <property type="project" value="UniProtKB"/>
</dbReference>
<dbReference type="GO" id="GO:0015031">
    <property type="term" value="P:protein transport"/>
    <property type="evidence" value="ECO:0007669"/>
    <property type="project" value="UniProtKB-KW"/>
</dbReference>
<dbReference type="GO" id="GO:0007224">
    <property type="term" value="P:smoothened signaling pathway"/>
    <property type="evidence" value="ECO:0000250"/>
    <property type="project" value="UniProtKB"/>
</dbReference>
<dbReference type="GO" id="GO:0007286">
    <property type="term" value="P:spermatid development"/>
    <property type="evidence" value="ECO:0000266"/>
    <property type="project" value="RGD"/>
</dbReference>
<dbReference type="FunFam" id="1.25.40.10:FF:000588">
    <property type="entry name" value="Intraflagellar transport protein 56"/>
    <property type="match status" value="1"/>
</dbReference>
<dbReference type="FunFam" id="1.25.40.10:FF:000136">
    <property type="entry name" value="Tetratricopeptide repeat domain 26"/>
    <property type="match status" value="1"/>
</dbReference>
<dbReference type="FunFam" id="1.25.40.10:FF:000271">
    <property type="entry name" value="Tetratricopeptide repeat domain 26"/>
    <property type="match status" value="1"/>
</dbReference>
<dbReference type="Gene3D" id="1.25.40.10">
    <property type="entry name" value="Tetratricopeptide repeat domain"/>
    <property type="match status" value="2"/>
</dbReference>
<dbReference type="InterPro" id="IPR011990">
    <property type="entry name" value="TPR-like_helical_dom_sf"/>
</dbReference>
<dbReference type="InterPro" id="IPR030511">
    <property type="entry name" value="TTC26"/>
</dbReference>
<dbReference type="PANTHER" id="PTHR14781">
    <property type="entry name" value="INTRAFLAGELLAR TRANSPORT PROTEIN 56"/>
    <property type="match status" value="1"/>
</dbReference>
<dbReference type="PANTHER" id="PTHR14781:SF0">
    <property type="entry name" value="INTRAFLAGELLAR TRANSPORT PROTEIN 56"/>
    <property type="match status" value="1"/>
</dbReference>
<dbReference type="Pfam" id="PF12895">
    <property type="entry name" value="ANAPC3"/>
    <property type="match status" value="1"/>
</dbReference>
<dbReference type="SUPFAM" id="SSF48452">
    <property type="entry name" value="TPR-like"/>
    <property type="match status" value="3"/>
</dbReference>
<dbReference type="PROSITE" id="PS50293">
    <property type="entry name" value="TPR_REGION"/>
    <property type="match status" value="2"/>
</dbReference>
<reference key="1">
    <citation type="journal article" date="2004" name="Genome Res.">
        <title>The status, quality, and expansion of the NIH full-length cDNA project: the Mammalian Gene Collection (MGC).</title>
        <authorList>
            <consortium name="The MGC Project Team"/>
        </authorList>
    </citation>
    <scope>NUCLEOTIDE SEQUENCE [LARGE SCALE MRNA]</scope>
    <source>
        <tissue>Testis</tissue>
    </source>
</reference>
<reference key="2">
    <citation type="journal article" date="2012" name="Mol. Biol. Cell">
        <title>Knockdown of ttc26 disrupts ciliogenesis of the photoreceptor cells and the pronephros in zebrafish.</title>
        <authorList>
            <person name="Zhang Q."/>
            <person name="Liu Q."/>
            <person name="Austin C."/>
            <person name="Drummond I."/>
            <person name="Pierce E.A."/>
        </authorList>
    </citation>
    <scope>SUBCELLULAR LOCATION</scope>
</reference>
<organism>
    <name type="scientific">Rattus norvegicus</name>
    <name type="common">Rat</name>
    <dbReference type="NCBI Taxonomy" id="10116"/>
    <lineage>
        <taxon>Eukaryota</taxon>
        <taxon>Metazoa</taxon>
        <taxon>Chordata</taxon>
        <taxon>Craniata</taxon>
        <taxon>Vertebrata</taxon>
        <taxon>Euteleostomi</taxon>
        <taxon>Mammalia</taxon>
        <taxon>Eutheria</taxon>
        <taxon>Euarchontoglires</taxon>
        <taxon>Glires</taxon>
        <taxon>Rodentia</taxon>
        <taxon>Myomorpha</taxon>
        <taxon>Muroidea</taxon>
        <taxon>Muridae</taxon>
        <taxon>Murinae</taxon>
        <taxon>Rattus</taxon>
    </lineage>
</organism>
<gene>
    <name evidence="1" type="primary">Ift56</name>
    <name evidence="5" type="synonym">Ttc26</name>
</gene>
<protein>
    <recommendedName>
        <fullName evidence="1">Intraflagellar transport protein 56</fullName>
    </recommendedName>
    <alternativeName>
        <fullName evidence="5">Tetratricopeptide repeat protein 26</fullName>
        <shortName>TPR repeat protein 26</shortName>
    </alternativeName>
</protein>
<evidence type="ECO:0000250" key="1">
    <source>
        <dbReference type="UniProtKB" id="Q8BS45"/>
    </source>
</evidence>
<evidence type="ECO:0000256" key="2">
    <source>
        <dbReference type="SAM" id="MobiDB-lite"/>
    </source>
</evidence>
<evidence type="ECO:0000269" key="3">
    <source>
    </source>
</evidence>
<evidence type="ECO:0000305" key="4"/>
<evidence type="ECO:0000312" key="5">
    <source>
        <dbReference type="RGD" id="1561363"/>
    </source>
</evidence>
<comment type="function">
    <text evidence="1">Component of the intraflagellar transport (IFT) complex B required for transport of proteins in the motile cilium. Required for transport of specific ciliary cargo proteins related to motility, while it is neither required for IFT complex B assembly or motion nor for cilium assembly. Required for efficient coupling between the accumulation of GLI2 and GLI3 at the ciliary tips and their dissociation from the negative regulator SUFU. Plays a key role in maintaining the integrity of the IFT complex B and the proper ciliary localization of the IFT complex B components. Not required for IFT complex A ciliary localization or function. Essential for maintaining proper microtubule organization within the ciliary axoneme.</text>
</comment>
<comment type="subunit">
    <text evidence="1">Component of the IFT complex B. Interacts with IFT46; the interaction is direct.</text>
</comment>
<comment type="subcellular location">
    <subcellularLocation>
        <location evidence="3">Cell projection</location>
        <location evidence="3">Cilium</location>
    </subcellularLocation>
    <text evidence="1">Localizes at the transition zone in photoreceptor cells.</text>
</comment>
<comment type="similarity">
    <text evidence="4">Belongs to the IFT56 family.</text>
</comment>
<keyword id="KW-0966">Cell projection</keyword>
<keyword id="KW-0969">Cilium</keyword>
<keyword id="KW-0653">Protein transport</keyword>
<keyword id="KW-1185">Reference proteome</keyword>
<keyword id="KW-0677">Repeat</keyword>
<keyword id="KW-0802">TPR repeat</keyword>
<keyword id="KW-0813">Transport</keyword>
<feature type="chain" id="PRO_0000289085" description="Intraflagellar transport protein 56">
    <location>
        <begin position="1"/>
        <end position="554"/>
    </location>
</feature>
<feature type="repeat" description="TPR 1">
    <location>
        <begin position="57"/>
        <end position="90"/>
    </location>
</feature>
<feature type="repeat" description="TPR 2">
    <location>
        <begin position="92"/>
        <end position="125"/>
    </location>
</feature>
<feature type="repeat" description="TPR 3">
    <location>
        <begin position="151"/>
        <end position="184"/>
    </location>
</feature>
<feature type="repeat" description="TPR 4">
    <location>
        <begin position="468"/>
        <end position="501"/>
    </location>
</feature>
<feature type="region of interest" description="Disordered" evidence="2">
    <location>
        <begin position="1"/>
        <end position="27"/>
    </location>
</feature>
<feature type="compositionally biased region" description="Basic residues" evidence="2">
    <location>
        <begin position="18"/>
        <end position="27"/>
    </location>
</feature>
<accession>Q5U2N8</accession>
<proteinExistence type="evidence at transcript level"/>
<name>IFT56_RAT</name>
<sequence length="554" mass="64135">MMLSRAKPAVGGESPHTDKRKKKGRKIPKLEDLLSQRDFTGAITLLEFKRHVGEQEEDTNLWIGYCAFHLGDYKRALEEYENAAKEENCNPEVWVNLACTYFFLGMYKQAEAAGFKAPKSRLQNRLLFHLAHKFNDEKKLMNFHQNLQDIKEDQLSLASIHYMRSHYQEAIDIYKRILLDNREYLALNVYVALCYYKLDYYDVSQEVLAVYLQQIPDSTIALNLKACNHFRLYNGKAAEAELKSLMDNASSPFEFAKELIRHNLVVFRGGEGALQVLPPLVDVIPEARLNLVIYYLRQDDVQEAYNLIKDLEPTTPQEYILKGVVNAALGQEMGSRDHMKIAQQFFQLVGGSASECDTIPGRQCMASCFFLLKQFDDVLIYLNSFKSYFYNDDIFNFNYAQAKAATGNTSEGEEVFLLIQSEKLKNDYIYLSWLARCYIMNKKPRLAWELYLKMETSGESFSLLQLIANDCYKMGQFYYSAKAFDVLERLDPNPEYWEGKRGACVGIFQMILAGREPKETLREVLHLLRSTGNTQVEYIIRIMKKWAKENRVPI</sequence>